<keyword id="KW-0004">4Fe-4S</keyword>
<keyword id="KW-0963">Cytoplasm</keyword>
<keyword id="KW-0408">Iron</keyword>
<keyword id="KW-0411">Iron-sulfur</keyword>
<keyword id="KW-0479">Metal-binding</keyword>
<keyword id="KW-0949">S-adenosyl-L-methionine</keyword>
<keyword id="KW-0808">Transferase</keyword>
<comment type="function">
    <text evidence="1">Catalyzes the radical-mediated insertion of two sulfur atoms into the C-6 and C-8 positions of the octanoyl moiety bound to the lipoyl domains of lipoate-dependent enzymes, thereby converting the octanoylated domains into lipoylated derivatives.</text>
</comment>
<comment type="catalytic activity">
    <reaction evidence="1">
        <text>[[Fe-S] cluster scaffold protein carrying a second [4Fe-4S](2+) cluster] + N(6)-octanoyl-L-lysyl-[protein] + 2 oxidized [2Fe-2S]-[ferredoxin] + 2 S-adenosyl-L-methionine + 4 H(+) = [[Fe-S] cluster scaffold protein] + N(6)-[(R)-dihydrolipoyl]-L-lysyl-[protein] + 4 Fe(3+) + 2 hydrogen sulfide + 2 5'-deoxyadenosine + 2 L-methionine + 2 reduced [2Fe-2S]-[ferredoxin]</text>
        <dbReference type="Rhea" id="RHEA:16585"/>
        <dbReference type="Rhea" id="RHEA-COMP:9928"/>
        <dbReference type="Rhea" id="RHEA-COMP:10000"/>
        <dbReference type="Rhea" id="RHEA-COMP:10001"/>
        <dbReference type="Rhea" id="RHEA-COMP:10475"/>
        <dbReference type="Rhea" id="RHEA-COMP:14568"/>
        <dbReference type="Rhea" id="RHEA-COMP:14569"/>
        <dbReference type="ChEBI" id="CHEBI:15378"/>
        <dbReference type="ChEBI" id="CHEBI:17319"/>
        <dbReference type="ChEBI" id="CHEBI:29034"/>
        <dbReference type="ChEBI" id="CHEBI:29919"/>
        <dbReference type="ChEBI" id="CHEBI:33722"/>
        <dbReference type="ChEBI" id="CHEBI:33737"/>
        <dbReference type="ChEBI" id="CHEBI:33738"/>
        <dbReference type="ChEBI" id="CHEBI:57844"/>
        <dbReference type="ChEBI" id="CHEBI:59789"/>
        <dbReference type="ChEBI" id="CHEBI:78809"/>
        <dbReference type="ChEBI" id="CHEBI:83100"/>
        <dbReference type="EC" id="2.8.1.8"/>
    </reaction>
</comment>
<comment type="cofactor">
    <cofactor evidence="1">
        <name>[4Fe-4S] cluster</name>
        <dbReference type="ChEBI" id="CHEBI:49883"/>
    </cofactor>
    <text evidence="1">Binds 2 [4Fe-4S] clusters per subunit. One cluster is coordinated with 3 cysteines and an exchangeable S-adenosyl-L-methionine.</text>
</comment>
<comment type="pathway">
    <text evidence="1">Protein modification; protein lipoylation via endogenous pathway; protein N(6)-(lipoyl)lysine from octanoyl-[acyl-carrier-protein]: step 2/2.</text>
</comment>
<comment type="subcellular location">
    <subcellularLocation>
        <location evidence="1">Cytoplasm</location>
    </subcellularLocation>
</comment>
<comment type="similarity">
    <text evidence="1">Belongs to the radical SAM superfamily. Lipoyl synthase family.</text>
</comment>
<feature type="chain" id="PRO_0000102341" description="Lipoyl synthase 2">
    <location>
        <begin position="1"/>
        <end position="299"/>
    </location>
</feature>
<feature type="domain" description="Radical SAM core" evidence="2">
    <location>
        <begin position="57"/>
        <end position="284"/>
    </location>
</feature>
<feature type="binding site" evidence="1">
    <location>
        <position position="45"/>
    </location>
    <ligand>
        <name>[4Fe-4S] cluster</name>
        <dbReference type="ChEBI" id="CHEBI:49883"/>
        <label>1</label>
    </ligand>
</feature>
<feature type="binding site" evidence="1">
    <location>
        <position position="50"/>
    </location>
    <ligand>
        <name>[4Fe-4S] cluster</name>
        <dbReference type="ChEBI" id="CHEBI:49883"/>
        <label>1</label>
    </ligand>
</feature>
<feature type="binding site" evidence="1">
    <location>
        <position position="56"/>
    </location>
    <ligand>
        <name>[4Fe-4S] cluster</name>
        <dbReference type="ChEBI" id="CHEBI:49883"/>
        <label>1</label>
    </ligand>
</feature>
<feature type="binding site" evidence="1">
    <location>
        <position position="71"/>
    </location>
    <ligand>
        <name>[4Fe-4S] cluster</name>
        <dbReference type="ChEBI" id="CHEBI:49883"/>
        <label>2</label>
        <note>4Fe-4S-S-AdoMet</note>
    </ligand>
</feature>
<feature type="binding site" evidence="1">
    <location>
        <position position="75"/>
    </location>
    <ligand>
        <name>[4Fe-4S] cluster</name>
        <dbReference type="ChEBI" id="CHEBI:49883"/>
        <label>2</label>
        <note>4Fe-4S-S-AdoMet</note>
    </ligand>
</feature>
<feature type="binding site" evidence="1">
    <location>
        <position position="78"/>
    </location>
    <ligand>
        <name>[4Fe-4S] cluster</name>
        <dbReference type="ChEBI" id="CHEBI:49883"/>
        <label>2</label>
        <note>4Fe-4S-S-AdoMet</note>
    </ligand>
</feature>
<feature type="binding site" evidence="1">
    <location>
        <position position="295"/>
    </location>
    <ligand>
        <name>[4Fe-4S] cluster</name>
        <dbReference type="ChEBI" id="CHEBI:49883"/>
        <label>1</label>
    </ligand>
</feature>
<dbReference type="EC" id="2.8.1.8" evidence="1"/>
<dbReference type="EMBL" id="BX548174">
    <property type="protein sequence ID" value="CAE19555.1"/>
    <property type="molecule type" value="Genomic_DNA"/>
</dbReference>
<dbReference type="RefSeq" id="WP_011132729.1">
    <property type="nucleotide sequence ID" value="NC_005072.1"/>
</dbReference>
<dbReference type="SMR" id="Q7V0Z8"/>
<dbReference type="STRING" id="59919.PMM1096"/>
<dbReference type="KEGG" id="pmm:PMM1096"/>
<dbReference type="eggNOG" id="COG0320">
    <property type="taxonomic scope" value="Bacteria"/>
</dbReference>
<dbReference type="HOGENOM" id="CLU_033144_2_1_3"/>
<dbReference type="OrthoDB" id="9787898at2"/>
<dbReference type="UniPathway" id="UPA00538">
    <property type="reaction ID" value="UER00593"/>
</dbReference>
<dbReference type="Proteomes" id="UP000001026">
    <property type="component" value="Chromosome"/>
</dbReference>
<dbReference type="GO" id="GO:0005737">
    <property type="term" value="C:cytoplasm"/>
    <property type="evidence" value="ECO:0007669"/>
    <property type="project" value="UniProtKB-SubCell"/>
</dbReference>
<dbReference type="GO" id="GO:0051539">
    <property type="term" value="F:4 iron, 4 sulfur cluster binding"/>
    <property type="evidence" value="ECO:0007669"/>
    <property type="project" value="UniProtKB-UniRule"/>
</dbReference>
<dbReference type="GO" id="GO:0016992">
    <property type="term" value="F:lipoate synthase activity"/>
    <property type="evidence" value="ECO:0007669"/>
    <property type="project" value="UniProtKB-UniRule"/>
</dbReference>
<dbReference type="GO" id="GO:0046872">
    <property type="term" value="F:metal ion binding"/>
    <property type="evidence" value="ECO:0007669"/>
    <property type="project" value="UniProtKB-KW"/>
</dbReference>
<dbReference type="CDD" id="cd01335">
    <property type="entry name" value="Radical_SAM"/>
    <property type="match status" value="1"/>
</dbReference>
<dbReference type="Gene3D" id="3.20.20.70">
    <property type="entry name" value="Aldolase class I"/>
    <property type="match status" value="1"/>
</dbReference>
<dbReference type="HAMAP" id="MF_00206">
    <property type="entry name" value="Lipoyl_synth"/>
    <property type="match status" value="1"/>
</dbReference>
<dbReference type="InterPro" id="IPR013785">
    <property type="entry name" value="Aldolase_TIM"/>
</dbReference>
<dbReference type="InterPro" id="IPR006638">
    <property type="entry name" value="Elp3/MiaA/NifB-like_rSAM"/>
</dbReference>
<dbReference type="InterPro" id="IPR031691">
    <property type="entry name" value="LIAS_N"/>
</dbReference>
<dbReference type="InterPro" id="IPR003698">
    <property type="entry name" value="Lipoyl_synth"/>
</dbReference>
<dbReference type="InterPro" id="IPR007197">
    <property type="entry name" value="rSAM"/>
</dbReference>
<dbReference type="NCBIfam" id="TIGR00510">
    <property type="entry name" value="lipA"/>
    <property type="match status" value="1"/>
</dbReference>
<dbReference type="NCBIfam" id="NF004019">
    <property type="entry name" value="PRK05481.1"/>
    <property type="match status" value="1"/>
</dbReference>
<dbReference type="NCBIfam" id="NF009544">
    <property type="entry name" value="PRK12928.1"/>
    <property type="match status" value="1"/>
</dbReference>
<dbReference type="PANTHER" id="PTHR10949">
    <property type="entry name" value="LIPOYL SYNTHASE"/>
    <property type="match status" value="1"/>
</dbReference>
<dbReference type="PANTHER" id="PTHR10949:SF0">
    <property type="entry name" value="LIPOYL SYNTHASE, MITOCHONDRIAL"/>
    <property type="match status" value="1"/>
</dbReference>
<dbReference type="Pfam" id="PF16881">
    <property type="entry name" value="LIAS_N"/>
    <property type="match status" value="1"/>
</dbReference>
<dbReference type="Pfam" id="PF04055">
    <property type="entry name" value="Radical_SAM"/>
    <property type="match status" value="1"/>
</dbReference>
<dbReference type="PIRSF" id="PIRSF005963">
    <property type="entry name" value="Lipoyl_synth"/>
    <property type="match status" value="1"/>
</dbReference>
<dbReference type="SFLD" id="SFLDF00271">
    <property type="entry name" value="lipoyl_synthase"/>
    <property type="match status" value="1"/>
</dbReference>
<dbReference type="SFLD" id="SFLDS00029">
    <property type="entry name" value="Radical_SAM"/>
    <property type="match status" value="1"/>
</dbReference>
<dbReference type="SMART" id="SM00729">
    <property type="entry name" value="Elp3"/>
    <property type="match status" value="1"/>
</dbReference>
<dbReference type="SUPFAM" id="SSF102114">
    <property type="entry name" value="Radical SAM enzymes"/>
    <property type="match status" value="1"/>
</dbReference>
<dbReference type="PROSITE" id="PS51918">
    <property type="entry name" value="RADICAL_SAM"/>
    <property type="match status" value="1"/>
</dbReference>
<organism>
    <name type="scientific">Prochlorococcus marinus subsp. pastoris (strain CCMP1986 / NIES-2087 / MED4)</name>
    <dbReference type="NCBI Taxonomy" id="59919"/>
    <lineage>
        <taxon>Bacteria</taxon>
        <taxon>Bacillati</taxon>
        <taxon>Cyanobacteriota</taxon>
        <taxon>Cyanophyceae</taxon>
        <taxon>Synechococcales</taxon>
        <taxon>Prochlorococcaceae</taxon>
        <taxon>Prochlorococcus</taxon>
    </lineage>
</organism>
<gene>
    <name evidence="1" type="primary">lipA2</name>
    <name type="synonym">lipA</name>
    <name type="ordered locus">PMM1096</name>
</gene>
<evidence type="ECO:0000255" key="1">
    <source>
        <dbReference type="HAMAP-Rule" id="MF_00206"/>
    </source>
</evidence>
<evidence type="ECO:0000255" key="2">
    <source>
        <dbReference type="PROSITE-ProRule" id="PRU01266"/>
    </source>
</evidence>
<accession>Q7V0Z8</accession>
<name>LIPA2_PROMP</name>
<proteinExistence type="inferred from homology"/>
<reference key="1">
    <citation type="journal article" date="2003" name="Nature">
        <title>Genome divergence in two Prochlorococcus ecotypes reflects oceanic niche differentiation.</title>
        <authorList>
            <person name="Rocap G."/>
            <person name="Larimer F.W."/>
            <person name="Lamerdin J.E."/>
            <person name="Malfatti S."/>
            <person name="Chain P."/>
            <person name="Ahlgren N.A."/>
            <person name="Arellano A."/>
            <person name="Coleman M."/>
            <person name="Hauser L."/>
            <person name="Hess W.R."/>
            <person name="Johnson Z.I."/>
            <person name="Land M.L."/>
            <person name="Lindell D."/>
            <person name="Post A.F."/>
            <person name="Regala W."/>
            <person name="Shah M."/>
            <person name="Shaw S.L."/>
            <person name="Steglich C."/>
            <person name="Sullivan M.B."/>
            <person name="Ting C.S."/>
            <person name="Tolonen A."/>
            <person name="Webb E.A."/>
            <person name="Zinser E.R."/>
            <person name="Chisholm S.W."/>
        </authorList>
    </citation>
    <scope>NUCLEOTIDE SEQUENCE [LARGE SCALE GENOMIC DNA]</scope>
    <source>
        <strain>CCMP1986 / NIES-2087 / MED4</strain>
    </source>
</reference>
<protein>
    <recommendedName>
        <fullName evidence="1">Lipoyl synthase 2</fullName>
        <ecNumber evidence="1">2.8.1.8</ecNumber>
    </recommendedName>
    <alternativeName>
        <fullName evidence="1">Lip-syn 2</fullName>
        <shortName evidence="1">LS 2</shortName>
    </alternativeName>
    <alternativeName>
        <fullName evidence="1">Lipoate synthase 2</fullName>
    </alternativeName>
    <alternativeName>
        <fullName evidence="1">Lipoic acid synthase 2</fullName>
    </alternativeName>
    <alternativeName>
        <fullName evidence="1">Sulfur insertion protein LipA 2</fullName>
    </alternativeName>
</protein>
<sequence length="299" mass="33891">MKNKNQMKVEKILRLPSWIKFPISKASEFEKMQRLIRKSNIHTICEEGRCPNRAECYASGTATFLLGGSICSRACAFCQVNKGKPSEINKYESIQVAEAVKILNLKYVVLTSVARDDLPDHGANLFVSTINQIRKIDPKIQIEVLTPDLWGGGKSFEDKDKLQKDRLKKILEQRPICFNHNLETVERLQKEVRRGANYKNSIGLLEKAKSIAPNIQTKSGIMLGLGETLKEIETTILDLKKVDCNQITIGQYLRPSLKHLSVKKYWAPKEFEYLKSFCSKLGFKKVSCGPLVRSSYHAG</sequence>